<dbReference type="EMBL" id="BA000022">
    <property type="protein sequence ID" value="BAA18244.1"/>
    <property type="molecule type" value="Genomic_DNA"/>
</dbReference>
<dbReference type="PIR" id="S75683">
    <property type="entry name" value="S75683"/>
</dbReference>
<dbReference type="IntAct" id="P74155">
    <property type="interactions" value="19"/>
</dbReference>
<dbReference type="STRING" id="1148.gene:10499118"/>
<dbReference type="PaxDb" id="1148-1653329"/>
<dbReference type="EnsemblBacteria" id="BAA18244">
    <property type="protein sequence ID" value="BAA18244"/>
    <property type="gene ID" value="BAA18244"/>
</dbReference>
<dbReference type="KEGG" id="syn:slr1471"/>
<dbReference type="eggNOG" id="COG0706">
    <property type="taxonomic scope" value="Bacteria"/>
</dbReference>
<dbReference type="InParanoid" id="P74155"/>
<dbReference type="Proteomes" id="UP000001425">
    <property type="component" value="Chromosome"/>
</dbReference>
<dbReference type="GO" id="GO:0005886">
    <property type="term" value="C:plasma membrane"/>
    <property type="evidence" value="ECO:0000318"/>
    <property type="project" value="GO_Central"/>
</dbReference>
<dbReference type="GO" id="GO:0032977">
    <property type="term" value="F:membrane insertase activity"/>
    <property type="evidence" value="ECO:0000318"/>
    <property type="project" value="GO_Central"/>
</dbReference>
<dbReference type="GO" id="GO:0051205">
    <property type="term" value="P:protein insertion into membrane"/>
    <property type="evidence" value="ECO:0000318"/>
    <property type="project" value="GO_Central"/>
</dbReference>
<dbReference type="GO" id="GO:0015031">
    <property type="term" value="P:protein transport"/>
    <property type="evidence" value="ECO:0007669"/>
    <property type="project" value="UniProtKB-KW"/>
</dbReference>
<dbReference type="CDD" id="cd20070">
    <property type="entry name" value="5TM_YidC_Alb3"/>
    <property type="match status" value="1"/>
</dbReference>
<dbReference type="InterPro" id="IPR001708">
    <property type="entry name" value="YidC/ALB3/OXA1/COX18"/>
</dbReference>
<dbReference type="InterPro" id="IPR028055">
    <property type="entry name" value="YidC/Oxa/ALB_C"/>
</dbReference>
<dbReference type="InterPro" id="IPR047196">
    <property type="entry name" value="YidC_ALB_C"/>
</dbReference>
<dbReference type="NCBIfam" id="NF002734">
    <property type="entry name" value="PRK02654.1"/>
    <property type="match status" value="1"/>
</dbReference>
<dbReference type="NCBIfam" id="TIGR03592">
    <property type="entry name" value="yidC_oxa1_cterm"/>
    <property type="match status" value="1"/>
</dbReference>
<dbReference type="PANTHER" id="PTHR12428:SF65">
    <property type="entry name" value="CYTOCHROME C OXIDASE ASSEMBLY PROTEIN COX18, MITOCHONDRIAL"/>
    <property type="match status" value="1"/>
</dbReference>
<dbReference type="PANTHER" id="PTHR12428">
    <property type="entry name" value="OXA1"/>
    <property type="match status" value="1"/>
</dbReference>
<dbReference type="Pfam" id="PF02096">
    <property type="entry name" value="60KD_IMP"/>
    <property type="match status" value="1"/>
</dbReference>
<accession>P74155</accession>
<reference key="1">
    <citation type="journal article" date="1996" name="DNA Res.">
        <title>Sequence analysis of the genome of the unicellular cyanobacterium Synechocystis sp. strain PCC6803. II. Sequence determination of the entire genome and assignment of potential protein-coding regions.</title>
        <authorList>
            <person name="Kaneko T."/>
            <person name="Sato S."/>
            <person name="Kotani H."/>
            <person name="Tanaka A."/>
            <person name="Asamizu E."/>
            <person name="Nakamura Y."/>
            <person name="Miyajima N."/>
            <person name="Hirosawa M."/>
            <person name="Sugiura M."/>
            <person name="Sasamoto S."/>
            <person name="Kimura T."/>
            <person name="Hosouchi T."/>
            <person name="Matsuno A."/>
            <person name="Muraki A."/>
            <person name="Nakazaki N."/>
            <person name="Naruo K."/>
            <person name="Okumura S."/>
            <person name="Shimpo S."/>
            <person name="Takeuchi C."/>
            <person name="Wada T."/>
            <person name="Watanabe A."/>
            <person name="Yamada M."/>
            <person name="Yasuda M."/>
            <person name="Tabata S."/>
        </authorList>
    </citation>
    <scope>NUCLEOTIDE SEQUENCE [LARGE SCALE GENOMIC DNA]</scope>
    <source>
        <strain>ATCC 27184 / PCC 6803 / Kazusa</strain>
    </source>
</reference>
<reference key="2">
    <citation type="journal article" date="2004" name="J. Biol. Chem.">
        <title>A homolog of Albino3/OxaI is essential for thylakoid biogenesis in the cyanobacterium Synechocystis sp. PCC6803.</title>
        <authorList>
            <person name="Spence E."/>
            <person name="Bailey S."/>
            <person name="Nenninger A."/>
            <person name="Moller S.G."/>
            <person name="Robinson C."/>
        </authorList>
    </citation>
    <scope>FUNCTION</scope>
    <scope>DISRUPTION PHENOTYPE</scope>
</reference>
<reference key="3">
    <citation type="journal article" date="2006" name="Plant Cell">
        <title>The synechocystis sp PCC 6803 oxa1 homolog is essential for membrane integration of reaction center precursor protein pD1.</title>
        <authorList>
            <person name="Ossenbuhl F."/>
            <person name="Inaba-Sulpice M."/>
            <person name="Meurer J."/>
            <person name="Soll J."/>
            <person name="Eichacker L.A."/>
        </authorList>
    </citation>
    <scope>FUNCTION IN ASSEMBLY OF D1</scope>
    <scope>INTERACTION WITH D1</scope>
    <scope>SUBCELLULAR LOCATION</scope>
    <source>
        <strain>ATCC 27184 / PCC 6803 / N-1</strain>
    </source>
</reference>
<reference key="4">
    <citation type="journal article" date="2008" name="J. Microbiol. Biotechnol.">
        <title>A conserved structure and function of the YidC homologous protein Slr1471 from Synechocystis sp. PCC 6803.</title>
        <authorList>
            <person name="Sven G."/>
            <person name="Eva R."/>
            <person name="Uwe K."/>
            <person name="Schneider D."/>
        </authorList>
    </citation>
    <scope>SUBCELLULAR LOCATION</scope>
    <source>
        <strain>ATCC 27184 / PCC 6803 / N-1</strain>
    </source>
</reference>
<reference key="5">
    <citation type="journal article" date="2018" name="Proc. Natl. Acad. Sci. U.S.A.">
        <title>Ycf48 involved in the biogenesis of the oxygen-evolving photosystem II complex is a seven-bladed beta-propeller protein.</title>
        <authorList>
            <person name="Yu J."/>
            <person name="Knoppova J."/>
            <person name="Michoux F."/>
            <person name="Bialek W."/>
            <person name="Cota E."/>
            <person name="Shukla M.K."/>
            <person name="Straskova A."/>
            <person name="Pascual Aznar G."/>
            <person name="Sobotka R."/>
            <person name="Komenda J."/>
            <person name="Murray J.W."/>
            <person name="Nixon P.J."/>
        </authorList>
    </citation>
    <scope>INTERACTION WITH CYANOP; FTHS2; FTSH3; PHB1; YCF39 AND YCF48</scope>
    <scope>SUBUNIT</scope>
    <source>
        <strain>ATCC 27184 / PCC 6803 / Kazusa</strain>
    </source>
</reference>
<evidence type="ECO:0000250" key="1">
    <source>
        <dbReference type="UniProtKB" id="P25714"/>
    </source>
</evidence>
<evidence type="ECO:0000255" key="2"/>
<evidence type="ECO:0000256" key="3">
    <source>
        <dbReference type="SAM" id="MobiDB-lite"/>
    </source>
</evidence>
<evidence type="ECO:0000269" key="4">
    <source>
    </source>
</evidence>
<evidence type="ECO:0000269" key="5">
    <source>
    </source>
</evidence>
<evidence type="ECO:0000269" key="6">
    <source>
    </source>
</evidence>
<evidence type="ECO:0000269" key="7">
    <source>
    </source>
</evidence>
<evidence type="ECO:0000305" key="8"/>
<name>YIDC_SYNY3</name>
<gene>
    <name type="primary">yidC</name>
    <name type="synonym">alb3</name>
    <name type="ordered locus">slr1471</name>
</gene>
<keyword id="KW-0997">Cell inner membrane</keyword>
<keyword id="KW-1003">Cell membrane</keyword>
<keyword id="KW-0143">Chaperone</keyword>
<keyword id="KW-0472">Membrane</keyword>
<keyword id="KW-0653">Protein transport</keyword>
<keyword id="KW-1185">Reference proteome</keyword>
<keyword id="KW-0812">Transmembrane</keyword>
<keyword id="KW-1133">Transmembrane helix</keyword>
<keyword id="KW-0813">Transport</keyword>
<sequence length="384" mass="42627">MDFGIGFISTNIMLPILDFFFGIVHSYGFAIIALTLVIRLGLYPLSAGQIRNMRKMRITQPLMKERQEEIQKRYKDDPAKQQEEMAKVMKEFGNPLAGCLPLLLQMPILFALFATLRGSPFSDINYTVDLQILPQEQVERIVPQTFSTKPQNIYVDEALHYPIAVFLPGGKMLGVGEKTQLEIQSTEGKAFNQVIPEKNSQILTPTYSVTKGEDRISVNPDGTIEALVPGDATVQVTIPGIAARTGFLFIKALGQVGVTGENGEINWDILGMIVFFGFSIYLNQELSGASGGGAPNAQAQQQQTINKITPILFSGMFLFFPLPAGVLMYIVMANVFQTIQTLILMREPLPENLQKLLDEQQKATQGRESLPFEKKSSKKKEKTS</sequence>
<feature type="chain" id="PRO_0000124759" description="Membrane protein insertase YidC">
    <location>
        <begin position="1"/>
        <end position="384"/>
    </location>
</feature>
<feature type="transmembrane region" description="Helical" evidence="2">
    <location>
        <begin position="12"/>
        <end position="32"/>
    </location>
</feature>
<feature type="transmembrane region" description="Helical" evidence="2">
    <location>
        <begin position="96"/>
        <end position="116"/>
    </location>
</feature>
<feature type="transmembrane region" description="Helical" evidence="2">
    <location>
        <begin position="311"/>
        <end position="331"/>
    </location>
</feature>
<feature type="region of interest" description="Disordered" evidence="3">
    <location>
        <begin position="357"/>
        <end position="384"/>
    </location>
</feature>
<protein>
    <recommendedName>
        <fullName>Membrane protein insertase YidC</fullName>
    </recommendedName>
    <alternativeName>
        <fullName>Alb3</fullName>
    </alternativeName>
    <alternativeName>
        <fullName>Foldase YidC</fullName>
    </alternativeName>
    <alternativeName>
        <fullName>Membrane integrase YidC</fullName>
    </alternativeName>
    <alternativeName>
        <fullName>Membrane protein YidC</fullName>
    </alternativeName>
    <alternativeName>
        <fullName>Oxa1</fullName>
    </alternativeName>
    <alternativeName>
        <fullName>SynYidC</fullName>
    </alternativeName>
</protein>
<organism>
    <name type="scientific">Synechocystis sp. (strain ATCC 27184 / PCC 6803 / Kazusa)</name>
    <dbReference type="NCBI Taxonomy" id="1111708"/>
    <lineage>
        <taxon>Bacteria</taxon>
        <taxon>Bacillati</taxon>
        <taxon>Cyanobacteriota</taxon>
        <taxon>Cyanophyceae</taxon>
        <taxon>Synechococcales</taxon>
        <taxon>Merismopediaceae</taxon>
        <taxon>Synechocystis</taxon>
    </lineage>
</organism>
<proteinExistence type="evidence at protein level"/>
<comment type="function">
    <text evidence="1 4 5">Required for the insertion of integral membrane proteins into the membrane. Probably plays an essential role in the integration of proteins of the respiratory chain complexes. Involved in integration of membrane proteins that insert dependently and independently of the Sec translocase complex (By similarity). Addition of green fluorescent protein (GFP) to the C-terminus leads to photoinhibition at 80 umol/m(2)/s light intensity, reduced amounts of pigment, altered energy transfer between the antenna systems and the reaction centers of PSI and PSII, and impaired integration of PSII reaction center protein D1 (psbA) into membranes, suggesting it probably also aids protein insertion, folding and/or assembly of membrane complexes destined for the thylakoid (PubMed:15498761, PubMed:16905652).</text>
</comment>
<comment type="subunit">
    <text evidence="1 5 7">Specifically interacts with transmembrane segments of nascent integral membrane proteins during membrane integration (By similarity). Interacts with the precursor of PSII reaction center D1 (PubMed:16905652). Coimmunoprecipitates with CyanoP (tlr2075), FtsH2, FtsH3, Phb1 (slr1106), Ycf39 and Ycf48 (PubMed:30061392).</text>
</comment>
<comment type="subcellular location">
    <subcellularLocation>
        <location evidence="5 6">Cell inner membrane</location>
        <topology evidence="5 6">Multi-pass membrane protein</topology>
    </subcellularLocation>
</comment>
<comment type="disruption phenotype">
    <text evidence="4">Merodiplod cells have greatly altered thylakoid morphology, and about 40% photosynthetic pigements, photosynthetic electron transport and oxygen evolution.</text>
</comment>
<comment type="similarity">
    <text evidence="8">Belongs to the OXA1/ALB3/YidC family. Type 1 subfamily.</text>
</comment>